<protein>
    <recommendedName>
        <fullName evidence="1">Holliday junction branch migration complex subunit RuvB</fullName>
        <ecNumber evidence="1">3.6.4.-</ecNumber>
    </recommendedName>
</protein>
<gene>
    <name evidence="1" type="primary">ruvB</name>
    <name type="ordered locus">CKL_3144</name>
</gene>
<dbReference type="EC" id="3.6.4.-" evidence="1"/>
<dbReference type="EMBL" id="CP000673">
    <property type="protein sequence ID" value="EDK35152.1"/>
    <property type="molecule type" value="Genomic_DNA"/>
</dbReference>
<dbReference type="RefSeq" id="WP_012103487.1">
    <property type="nucleotide sequence ID" value="NC_009706.1"/>
</dbReference>
<dbReference type="SMR" id="A5N206"/>
<dbReference type="STRING" id="431943.CKL_3144"/>
<dbReference type="KEGG" id="ckl:CKL_3144"/>
<dbReference type="eggNOG" id="COG2255">
    <property type="taxonomic scope" value="Bacteria"/>
</dbReference>
<dbReference type="HOGENOM" id="CLU_055599_1_0_9"/>
<dbReference type="Proteomes" id="UP000002411">
    <property type="component" value="Chromosome"/>
</dbReference>
<dbReference type="GO" id="GO:0005737">
    <property type="term" value="C:cytoplasm"/>
    <property type="evidence" value="ECO:0007669"/>
    <property type="project" value="UniProtKB-SubCell"/>
</dbReference>
<dbReference type="GO" id="GO:0048476">
    <property type="term" value="C:Holliday junction resolvase complex"/>
    <property type="evidence" value="ECO:0007669"/>
    <property type="project" value="UniProtKB-UniRule"/>
</dbReference>
<dbReference type="GO" id="GO:0005524">
    <property type="term" value="F:ATP binding"/>
    <property type="evidence" value="ECO:0007669"/>
    <property type="project" value="UniProtKB-UniRule"/>
</dbReference>
<dbReference type="GO" id="GO:0016887">
    <property type="term" value="F:ATP hydrolysis activity"/>
    <property type="evidence" value="ECO:0007669"/>
    <property type="project" value="InterPro"/>
</dbReference>
<dbReference type="GO" id="GO:0000400">
    <property type="term" value="F:four-way junction DNA binding"/>
    <property type="evidence" value="ECO:0007669"/>
    <property type="project" value="UniProtKB-UniRule"/>
</dbReference>
<dbReference type="GO" id="GO:0009378">
    <property type="term" value="F:four-way junction helicase activity"/>
    <property type="evidence" value="ECO:0007669"/>
    <property type="project" value="InterPro"/>
</dbReference>
<dbReference type="GO" id="GO:0006310">
    <property type="term" value="P:DNA recombination"/>
    <property type="evidence" value="ECO:0007669"/>
    <property type="project" value="UniProtKB-UniRule"/>
</dbReference>
<dbReference type="GO" id="GO:0006281">
    <property type="term" value="P:DNA repair"/>
    <property type="evidence" value="ECO:0007669"/>
    <property type="project" value="UniProtKB-UniRule"/>
</dbReference>
<dbReference type="CDD" id="cd00009">
    <property type="entry name" value="AAA"/>
    <property type="match status" value="1"/>
</dbReference>
<dbReference type="Gene3D" id="1.10.8.60">
    <property type="match status" value="1"/>
</dbReference>
<dbReference type="Gene3D" id="3.40.50.300">
    <property type="entry name" value="P-loop containing nucleotide triphosphate hydrolases"/>
    <property type="match status" value="1"/>
</dbReference>
<dbReference type="Gene3D" id="1.10.10.10">
    <property type="entry name" value="Winged helix-like DNA-binding domain superfamily/Winged helix DNA-binding domain"/>
    <property type="match status" value="1"/>
</dbReference>
<dbReference type="HAMAP" id="MF_00016">
    <property type="entry name" value="DNA_HJ_migration_RuvB"/>
    <property type="match status" value="1"/>
</dbReference>
<dbReference type="InterPro" id="IPR003593">
    <property type="entry name" value="AAA+_ATPase"/>
</dbReference>
<dbReference type="InterPro" id="IPR041445">
    <property type="entry name" value="AAA_lid_4"/>
</dbReference>
<dbReference type="InterPro" id="IPR004605">
    <property type="entry name" value="DNA_helicase_Holl-junc_RuvB"/>
</dbReference>
<dbReference type="InterPro" id="IPR027417">
    <property type="entry name" value="P-loop_NTPase"/>
</dbReference>
<dbReference type="InterPro" id="IPR008824">
    <property type="entry name" value="RuvB-like_N"/>
</dbReference>
<dbReference type="InterPro" id="IPR008823">
    <property type="entry name" value="RuvB_C"/>
</dbReference>
<dbReference type="InterPro" id="IPR036388">
    <property type="entry name" value="WH-like_DNA-bd_sf"/>
</dbReference>
<dbReference type="InterPro" id="IPR036390">
    <property type="entry name" value="WH_DNA-bd_sf"/>
</dbReference>
<dbReference type="NCBIfam" id="NF000868">
    <property type="entry name" value="PRK00080.1"/>
    <property type="match status" value="1"/>
</dbReference>
<dbReference type="NCBIfam" id="TIGR00635">
    <property type="entry name" value="ruvB"/>
    <property type="match status" value="1"/>
</dbReference>
<dbReference type="PANTHER" id="PTHR42848">
    <property type="match status" value="1"/>
</dbReference>
<dbReference type="PANTHER" id="PTHR42848:SF1">
    <property type="entry name" value="HOLLIDAY JUNCTION BRANCH MIGRATION COMPLEX SUBUNIT RUVB"/>
    <property type="match status" value="1"/>
</dbReference>
<dbReference type="Pfam" id="PF17864">
    <property type="entry name" value="AAA_lid_4"/>
    <property type="match status" value="1"/>
</dbReference>
<dbReference type="Pfam" id="PF05491">
    <property type="entry name" value="RuvB_C"/>
    <property type="match status" value="1"/>
</dbReference>
<dbReference type="Pfam" id="PF05496">
    <property type="entry name" value="RuvB_N"/>
    <property type="match status" value="1"/>
</dbReference>
<dbReference type="SMART" id="SM00382">
    <property type="entry name" value="AAA"/>
    <property type="match status" value="1"/>
</dbReference>
<dbReference type="SUPFAM" id="SSF52540">
    <property type="entry name" value="P-loop containing nucleoside triphosphate hydrolases"/>
    <property type="match status" value="1"/>
</dbReference>
<dbReference type="SUPFAM" id="SSF46785">
    <property type="entry name" value="Winged helix' DNA-binding domain"/>
    <property type="match status" value="1"/>
</dbReference>
<comment type="function">
    <text evidence="1">The RuvA-RuvB-RuvC complex processes Holliday junction (HJ) DNA during genetic recombination and DNA repair, while the RuvA-RuvB complex plays an important role in the rescue of blocked DNA replication forks via replication fork reversal (RFR). RuvA specifically binds to HJ cruciform DNA, conferring on it an open structure. The RuvB hexamer acts as an ATP-dependent pump, pulling dsDNA into and through the RuvAB complex. RuvB forms 2 homohexamers on either side of HJ DNA bound by 1 or 2 RuvA tetramers; 4 subunits per hexamer contact DNA at a time. Coordinated motions by a converter formed by DNA-disengaged RuvB subunits stimulates ATP hydrolysis and nucleotide exchange. Immobilization of the converter enables RuvB to convert the ATP-contained energy into a lever motion, pulling 2 nucleotides of DNA out of the RuvA tetramer per ATP hydrolyzed, thus driving DNA branch migration. The RuvB motors rotate together with the DNA substrate, which together with the progressing nucleotide cycle form the mechanistic basis for DNA recombination by continuous HJ branch migration. Branch migration allows RuvC to scan DNA until it finds its consensus sequence, where it cleaves and resolves cruciform DNA.</text>
</comment>
<comment type="catalytic activity">
    <reaction evidence="1">
        <text>ATP + H2O = ADP + phosphate + H(+)</text>
        <dbReference type="Rhea" id="RHEA:13065"/>
        <dbReference type="ChEBI" id="CHEBI:15377"/>
        <dbReference type="ChEBI" id="CHEBI:15378"/>
        <dbReference type="ChEBI" id="CHEBI:30616"/>
        <dbReference type="ChEBI" id="CHEBI:43474"/>
        <dbReference type="ChEBI" id="CHEBI:456216"/>
    </reaction>
</comment>
<comment type="subunit">
    <text evidence="1">Homohexamer. Forms an RuvA(8)-RuvB(12)-Holliday junction (HJ) complex. HJ DNA is sandwiched between 2 RuvA tetramers; dsDNA enters through RuvA and exits via RuvB. An RuvB hexamer assembles on each DNA strand where it exits the tetramer. Each RuvB hexamer is contacted by two RuvA subunits (via domain III) on 2 adjacent RuvB subunits; this complex drives branch migration. In the full resolvosome a probable DNA-RuvA(4)-RuvB(12)-RuvC(2) complex forms which resolves the HJ.</text>
</comment>
<comment type="subcellular location">
    <subcellularLocation>
        <location evidence="1">Cytoplasm</location>
    </subcellularLocation>
</comment>
<comment type="domain">
    <text evidence="1">Has 3 domains, the large (RuvB-L) and small ATPase (RuvB-S) domains and the C-terminal head (RuvB-H) domain. The head domain binds DNA, while the ATPase domains jointly bind ATP, ADP or are empty depending on the state of the subunit in the translocation cycle. During a single DNA translocation step the structure of each domain remains the same, but their relative positions change.</text>
</comment>
<comment type="similarity">
    <text evidence="1">Belongs to the RuvB family.</text>
</comment>
<proteinExistence type="inferred from homology"/>
<organism>
    <name type="scientific">Clostridium kluyveri (strain ATCC 8527 / DSM 555 / NBRC 12016 / NCIMB 10680 / K1)</name>
    <dbReference type="NCBI Taxonomy" id="431943"/>
    <lineage>
        <taxon>Bacteria</taxon>
        <taxon>Bacillati</taxon>
        <taxon>Bacillota</taxon>
        <taxon>Clostridia</taxon>
        <taxon>Eubacteriales</taxon>
        <taxon>Clostridiaceae</taxon>
        <taxon>Clostridium</taxon>
    </lineage>
</organism>
<evidence type="ECO:0000255" key="1">
    <source>
        <dbReference type="HAMAP-Rule" id="MF_00016"/>
    </source>
</evidence>
<feature type="chain" id="PRO_1000074078" description="Holliday junction branch migration complex subunit RuvB">
    <location>
        <begin position="1"/>
        <end position="350"/>
    </location>
</feature>
<feature type="region of interest" description="Large ATPase domain (RuvB-L)" evidence="1">
    <location>
        <begin position="1"/>
        <end position="182"/>
    </location>
</feature>
<feature type="region of interest" description="Small ATPAse domain (RuvB-S)" evidence="1">
    <location>
        <begin position="183"/>
        <end position="253"/>
    </location>
</feature>
<feature type="region of interest" description="Head domain (RuvB-H)" evidence="1">
    <location>
        <begin position="256"/>
        <end position="350"/>
    </location>
</feature>
<feature type="binding site" evidence="1">
    <location>
        <position position="21"/>
    </location>
    <ligand>
        <name>ATP</name>
        <dbReference type="ChEBI" id="CHEBI:30616"/>
    </ligand>
</feature>
<feature type="binding site" evidence="1">
    <location>
        <position position="22"/>
    </location>
    <ligand>
        <name>ATP</name>
        <dbReference type="ChEBI" id="CHEBI:30616"/>
    </ligand>
</feature>
<feature type="binding site" evidence="1">
    <location>
        <position position="63"/>
    </location>
    <ligand>
        <name>ATP</name>
        <dbReference type="ChEBI" id="CHEBI:30616"/>
    </ligand>
</feature>
<feature type="binding site" evidence="1">
    <location>
        <position position="66"/>
    </location>
    <ligand>
        <name>ATP</name>
        <dbReference type="ChEBI" id="CHEBI:30616"/>
    </ligand>
</feature>
<feature type="binding site" evidence="1">
    <location>
        <position position="67"/>
    </location>
    <ligand>
        <name>ATP</name>
        <dbReference type="ChEBI" id="CHEBI:30616"/>
    </ligand>
</feature>
<feature type="binding site" evidence="1">
    <location>
        <position position="67"/>
    </location>
    <ligand>
        <name>Mg(2+)</name>
        <dbReference type="ChEBI" id="CHEBI:18420"/>
    </ligand>
</feature>
<feature type="binding site" evidence="1">
    <location>
        <position position="68"/>
    </location>
    <ligand>
        <name>ATP</name>
        <dbReference type="ChEBI" id="CHEBI:30616"/>
    </ligand>
</feature>
<feature type="binding site" evidence="1">
    <location>
        <begin position="129"/>
        <end position="131"/>
    </location>
    <ligand>
        <name>ATP</name>
        <dbReference type="ChEBI" id="CHEBI:30616"/>
    </ligand>
</feature>
<feature type="binding site" evidence="1">
    <location>
        <position position="172"/>
    </location>
    <ligand>
        <name>ATP</name>
        <dbReference type="ChEBI" id="CHEBI:30616"/>
    </ligand>
</feature>
<feature type="binding site" evidence="1">
    <location>
        <position position="182"/>
    </location>
    <ligand>
        <name>ATP</name>
        <dbReference type="ChEBI" id="CHEBI:30616"/>
    </ligand>
</feature>
<feature type="binding site" evidence="1">
    <location>
        <position position="219"/>
    </location>
    <ligand>
        <name>ATP</name>
        <dbReference type="ChEBI" id="CHEBI:30616"/>
    </ligand>
</feature>
<feature type="binding site" evidence="1">
    <location>
        <position position="311"/>
    </location>
    <ligand>
        <name>DNA</name>
        <dbReference type="ChEBI" id="CHEBI:16991"/>
    </ligand>
</feature>
<feature type="binding site" evidence="1">
    <location>
        <position position="316"/>
    </location>
    <ligand>
        <name>DNA</name>
        <dbReference type="ChEBI" id="CHEBI:16991"/>
    </ligand>
</feature>
<reference key="1">
    <citation type="journal article" date="2008" name="Proc. Natl. Acad. Sci. U.S.A.">
        <title>The genome of Clostridium kluyveri, a strict anaerobe with unique metabolic features.</title>
        <authorList>
            <person name="Seedorf H."/>
            <person name="Fricke W.F."/>
            <person name="Veith B."/>
            <person name="Brueggemann H."/>
            <person name="Liesegang H."/>
            <person name="Strittmatter A."/>
            <person name="Miethke M."/>
            <person name="Buckel W."/>
            <person name="Hinderberger J."/>
            <person name="Li F."/>
            <person name="Hagemeier C."/>
            <person name="Thauer R.K."/>
            <person name="Gottschalk G."/>
        </authorList>
    </citation>
    <scope>NUCLEOTIDE SEQUENCE [LARGE SCALE GENOMIC DNA]</scope>
    <source>
        <strain>ATCC 8527 / DSM 555 / NBRC 12016 / NCIMB 10680 / K1</strain>
    </source>
</reference>
<keyword id="KW-0067">ATP-binding</keyword>
<keyword id="KW-0963">Cytoplasm</keyword>
<keyword id="KW-0227">DNA damage</keyword>
<keyword id="KW-0233">DNA recombination</keyword>
<keyword id="KW-0234">DNA repair</keyword>
<keyword id="KW-0238">DNA-binding</keyword>
<keyword id="KW-0378">Hydrolase</keyword>
<keyword id="KW-0547">Nucleotide-binding</keyword>
<keyword id="KW-1185">Reference proteome</keyword>
<accession>A5N206</accession>
<sequence>MEDRIVTPLNIRGDAESEYSLRPKSLKEYIGQRKVKEKLKIFIEAAKNRKEALDHVLFYGPPGLGKTTLANIIALEMGGNLKITSGPAIERAGDLAAILTGLDDRDVLFIDEIHRLNRSVEEILYPAMEDYALDIVIGKGASTKSIRLDLPRFTLIGATTRVGLLTAPLRDRFGVLCPMDFYDQEELSEIVVRSCNILKIRIEPEASVEIGKRSRGTPRIANRLLKRVRDYSEVKGNGTIDLKTSKAALELLEVDKEGFDSIDNKILRAIIDNFNGGPVGIETLAYFIGEELDTIEDVYEPYLLQKGFIIRTPRGRIASDSAYKHFNKTRKSSNAYHKNLKQSSLFDGEV</sequence>
<name>RUVB_CLOK5</name>